<proteinExistence type="evidence at transcript level"/>
<reference key="1">
    <citation type="submission" date="2005-06" db="EMBL/GenBank/DDBJ databases">
        <title>DNA sequences of macaque genes expressed in brain or testis and its evolutionary implications.</title>
        <authorList>
            <consortium name="International consortium for macaque cDNA sequencing and analysis"/>
        </authorList>
    </citation>
    <scope>NUCLEOTIDE SEQUENCE [LARGE SCALE MRNA]</scope>
    <source>
        <tissue>Testis</tissue>
    </source>
</reference>
<gene>
    <name type="primary">ACTRT2</name>
    <name type="ORF">QtsA-20323</name>
</gene>
<comment type="subcellular location">
    <subcellularLocation>
        <location evidence="1">Cytoplasm</location>
        <location evidence="1">Cytoskeleton</location>
    </subcellularLocation>
</comment>
<comment type="similarity">
    <text evidence="2">Belongs to the actin family.</text>
</comment>
<accession>Q4R317</accession>
<keyword id="KW-0963">Cytoplasm</keyword>
<keyword id="KW-0206">Cytoskeleton</keyword>
<keyword id="KW-1185">Reference proteome</keyword>
<organism>
    <name type="scientific">Macaca fascicularis</name>
    <name type="common">Crab-eating macaque</name>
    <name type="synonym">Cynomolgus monkey</name>
    <dbReference type="NCBI Taxonomy" id="9541"/>
    <lineage>
        <taxon>Eukaryota</taxon>
        <taxon>Metazoa</taxon>
        <taxon>Chordata</taxon>
        <taxon>Craniata</taxon>
        <taxon>Vertebrata</taxon>
        <taxon>Euteleostomi</taxon>
        <taxon>Mammalia</taxon>
        <taxon>Eutheria</taxon>
        <taxon>Euarchontoglires</taxon>
        <taxon>Primates</taxon>
        <taxon>Haplorrhini</taxon>
        <taxon>Catarrhini</taxon>
        <taxon>Cercopithecidae</taxon>
        <taxon>Cercopithecinae</taxon>
        <taxon>Macaca</taxon>
    </lineage>
</organism>
<dbReference type="EMBL" id="AB179451">
    <property type="protein sequence ID" value="BAE02502.1"/>
    <property type="molecule type" value="mRNA"/>
</dbReference>
<dbReference type="RefSeq" id="NP_001270853.1">
    <property type="nucleotide sequence ID" value="NM_001283924.1"/>
</dbReference>
<dbReference type="SMR" id="Q4R317"/>
<dbReference type="STRING" id="9541.ENSMFAP00000010635"/>
<dbReference type="eggNOG" id="KOG0676">
    <property type="taxonomic scope" value="Eukaryota"/>
</dbReference>
<dbReference type="Proteomes" id="UP000233100">
    <property type="component" value="Unplaced"/>
</dbReference>
<dbReference type="GO" id="GO:0005737">
    <property type="term" value="C:cytoplasm"/>
    <property type="evidence" value="ECO:0007669"/>
    <property type="project" value="UniProtKB-KW"/>
</dbReference>
<dbReference type="GO" id="GO:0005856">
    <property type="term" value="C:cytoskeleton"/>
    <property type="evidence" value="ECO:0007669"/>
    <property type="project" value="UniProtKB-SubCell"/>
</dbReference>
<dbReference type="CDD" id="cd13397">
    <property type="entry name" value="ASKHA_NBD_actin_Arp-T1-3"/>
    <property type="match status" value="1"/>
</dbReference>
<dbReference type="FunFam" id="3.90.640.10:FF:000007">
    <property type="entry name" value="Actin like 7B"/>
    <property type="match status" value="1"/>
</dbReference>
<dbReference type="FunFam" id="3.30.420.40:FF:000018">
    <property type="entry name" value="Actin-like protein (Centractin)"/>
    <property type="match status" value="1"/>
</dbReference>
<dbReference type="Gene3D" id="3.30.420.40">
    <property type="match status" value="2"/>
</dbReference>
<dbReference type="Gene3D" id="3.90.640.10">
    <property type="entry name" value="Actin, Chain A, domain 4"/>
    <property type="match status" value="1"/>
</dbReference>
<dbReference type="InterPro" id="IPR004000">
    <property type="entry name" value="Actin"/>
</dbReference>
<dbReference type="InterPro" id="IPR020902">
    <property type="entry name" value="Actin/actin-like_CS"/>
</dbReference>
<dbReference type="InterPro" id="IPR043129">
    <property type="entry name" value="ATPase_NBD"/>
</dbReference>
<dbReference type="PANTHER" id="PTHR11937">
    <property type="entry name" value="ACTIN"/>
    <property type="match status" value="1"/>
</dbReference>
<dbReference type="Pfam" id="PF00022">
    <property type="entry name" value="Actin"/>
    <property type="match status" value="1"/>
</dbReference>
<dbReference type="PRINTS" id="PR00190">
    <property type="entry name" value="ACTIN"/>
</dbReference>
<dbReference type="SMART" id="SM00268">
    <property type="entry name" value="ACTIN"/>
    <property type="match status" value="1"/>
</dbReference>
<dbReference type="SUPFAM" id="SSF53067">
    <property type="entry name" value="Actin-like ATPase domain"/>
    <property type="match status" value="2"/>
</dbReference>
<dbReference type="PROSITE" id="PS01132">
    <property type="entry name" value="ACTINS_ACT_LIKE"/>
    <property type="match status" value="1"/>
</dbReference>
<evidence type="ECO:0000250" key="1"/>
<evidence type="ECO:0000305" key="2"/>
<sequence>MFNPHALDSPAVIFDNGSGLCKAGLSGEFGPRHIVSSIVGHLKFQAPSAGANQKKYFVGEEALYKLEALQLHSPIERGLITGWDDMERLWKHLFEWELGVKPSDQPLLATEPSLNPRENREKMAEVMFENFGVPAFYLSDQAVLALYASACVTGLVVDSGDGVTCTVPIFEGYSLPHAVTKLHVAGRDITELLTQLLLASGHTFSCELDKGLVDDIKKKLCYVALEPEKELSRRPEEVLREYKLPDGNIISLGDPLCQAPEALFAPQQLGCQSPGLSHMVSSSITKCDADIQKILFGEIVLSGGTTLFHGLDDRLLKELEQLASKDTPIKITAPPDRWFSTWIGASIVTSLSSFKQMWVTAADFKEFGSSVVQRRCF</sequence>
<name>ACTT2_MACFA</name>
<protein>
    <recommendedName>
        <fullName>Actin-related protein T2</fullName>
        <shortName>ARP-T2</shortName>
    </recommendedName>
</protein>
<feature type="chain" id="PRO_0000260823" description="Actin-related protein T2">
    <location>
        <begin position="1"/>
        <end position="377"/>
    </location>
</feature>